<dbReference type="EMBL" id="AE014075">
    <property type="protein sequence ID" value="AAN82152.1"/>
    <property type="status" value="ALT_INIT"/>
    <property type="molecule type" value="Genomic_DNA"/>
</dbReference>
<dbReference type="RefSeq" id="WP_000853256.1">
    <property type="nucleotide sequence ID" value="NZ_CP051263.1"/>
</dbReference>
<dbReference type="SMR" id="P0AEQ2"/>
<dbReference type="STRING" id="199310.c3706"/>
<dbReference type="KEGG" id="ecc:c3706"/>
<dbReference type="eggNOG" id="COG3193">
    <property type="taxonomic scope" value="Bacteria"/>
</dbReference>
<dbReference type="HOGENOM" id="CLU_103773_1_2_6"/>
<dbReference type="Proteomes" id="UP000001410">
    <property type="component" value="Chromosome"/>
</dbReference>
<dbReference type="Gene3D" id="3.30.450.150">
    <property type="entry name" value="Haem-degrading domain"/>
    <property type="match status" value="1"/>
</dbReference>
<dbReference type="InterPro" id="IPR052517">
    <property type="entry name" value="GlcG_carb_metab_protein"/>
</dbReference>
<dbReference type="InterPro" id="IPR005624">
    <property type="entry name" value="PduO/GlcC-like"/>
</dbReference>
<dbReference type="InterPro" id="IPR038084">
    <property type="entry name" value="PduO/GlcC-like_sf"/>
</dbReference>
<dbReference type="NCBIfam" id="NF007275">
    <property type="entry name" value="PRK09732.1"/>
    <property type="match status" value="1"/>
</dbReference>
<dbReference type="PANTHER" id="PTHR34309:SF1">
    <property type="entry name" value="PROTEIN GLCG"/>
    <property type="match status" value="1"/>
</dbReference>
<dbReference type="PANTHER" id="PTHR34309">
    <property type="entry name" value="SLR1406 PROTEIN"/>
    <property type="match status" value="1"/>
</dbReference>
<dbReference type="Pfam" id="PF03928">
    <property type="entry name" value="HbpS-like"/>
    <property type="match status" value="1"/>
</dbReference>
<dbReference type="SUPFAM" id="SSF143744">
    <property type="entry name" value="GlcG-like"/>
    <property type="match status" value="1"/>
</dbReference>
<gene>
    <name type="primary">glcG</name>
    <name type="ordered locus">c3706</name>
</gene>
<accession>P0AEQ2</accession>
<accession>P45504</accession>
<reference key="1">
    <citation type="journal article" date="2002" name="Proc. Natl. Acad. Sci. U.S.A.">
        <title>Extensive mosaic structure revealed by the complete genome sequence of uropathogenic Escherichia coli.</title>
        <authorList>
            <person name="Welch R.A."/>
            <person name="Burland V."/>
            <person name="Plunkett G. III"/>
            <person name="Redford P."/>
            <person name="Roesch P."/>
            <person name="Rasko D."/>
            <person name="Buckles E.L."/>
            <person name="Liou S.-R."/>
            <person name="Boutin A."/>
            <person name="Hackett J."/>
            <person name="Stroud D."/>
            <person name="Mayhew G.F."/>
            <person name="Rose D.J."/>
            <person name="Zhou S."/>
            <person name="Schwartz D.C."/>
            <person name="Perna N.T."/>
            <person name="Mobley H.L.T."/>
            <person name="Donnenberg M.S."/>
            <person name="Blattner F.R."/>
        </authorList>
    </citation>
    <scope>NUCLEOTIDE SEQUENCE [LARGE SCALE GENOMIC DNA]</scope>
    <source>
        <strain>CFT073 / ATCC 700928 / UPEC</strain>
    </source>
</reference>
<name>GLCG_ECOL6</name>
<feature type="chain" id="PRO_0000087505" description="Protein GlcG">
    <location>
        <begin position="1"/>
        <end position="134"/>
    </location>
</feature>
<sequence>MKTKVILSQQMASAIIAAGQEEAQKNNWSVSIAVADDGGHLLALSRMDDCAPIAAYISQEKARTAALGRRETKGYEEMVNNGRTAFVTAPLLTSLEGGVPVVVDGQIIGAVGVSGLTGAQDAQVAKAAAAVLAK</sequence>
<proteinExistence type="inferred from homology"/>
<evidence type="ECO:0000305" key="1"/>
<protein>
    <recommendedName>
        <fullName>Protein GlcG</fullName>
    </recommendedName>
</protein>
<organism>
    <name type="scientific">Escherichia coli O6:H1 (strain CFT073 / ATCC 700928 / UPEC)</name>
    <dbReference type="NCBI Taxonomy" id="199310"/>
    <lineage>
        <taxon>Bacteria</taxon>
        <taxon>Pseudomonadati</taxon>
        <taxon>Pseudomonadota</taxon>
        <taxon>Gammaproteobacteria</taxon>
        <taxon>Enterobacterales</taxon>
        <taxon>Enterobacteriaceae</taxon>
        <taxon>Escherichia</taxon>
    </lineage>
</organism>
<keyword id="KW-1185">Reference proteome</keyword>
<comment type="similarity">
    <text evidence="1">Belongs to the GlcG family.</text>
</comment>
<comment type="sequence caution" evidence="1">
    <conflict type="erroneous initiation">
        <sequence resource="EMBL-CDS" id="AAN82152"/>
    </conflict>
</comment>